<accession>B1HS35</accession>
<proteinExistence type="inferred from homology"/>
<keyword id="KW-0067">ATP-binding</keyword>
<keyword id="KW-0963">Cytoplasm</keyword>
<keyword id="KW-0227">DNA damage</keyword>
<keyword id="KW-0234">DNA repair</keyword>
<keyword id="KW-0235">DNA replication</keyword>
<keyword id="KW-0238">DNA-binding</keyword>
<keyword id="KW-0547">Nucleotide-binding</keyword>
<keyword id="KW-0742">SOS response</keyword>
<evidence type="ECO:0000255" key="1">
    <source>
        <dbReference type="HAMAP-Rule" id="MF_00365"/>
    </source>
</evidence>
<protein>
    <recommendedName>
        <fullName evidence="1">DNA replication and repair protein RecF</fullName>
    </recommendedName>
</protein>
<comment type="function">
    <text evidence="1">The RecF protein is involved in DNA metabolism; it is required for DNA replication and normal SOS inducibility. RecF binds preferentially to single-stranded, linear DNA. It also seems to bind ATP.</text>
</comment>
<comment type="subcellular location">
    <subcellularLocation>
        <location evidence="1">Cytoplasm</location>
    </subcellularLocation>
</comment>
<comment type="similarity">
    <text evidence="1">Belongs to the RecF family.</text>
</comment>
<name>RECF_LYSSC</name>
<reference key="1">
    <citation type="journal article" date="2008" name="J. Bacteriol.">
        <title>Complete genome sequence of the mosquitocidal bacterium Bacillus sphaericus C3-41 and comparison with those of closely related Bacillus species.</title>
        <authorList>
            <person name="Hu X."/>
            <person name="Fan W."/>
            <person name="Han B."/>
            <person name="Liu H."/>
            <person name="Zheng D."/>
            <person name="Li Q."/>
            <person name="Dong W."/>
            <person name="Yan J."/>
            <person name="Gao M."/>
            <person name="Berry C."/>
            <person name="Yuan Z."/>
        </authorList>
    </citation>
    <scope>NUCLEOTIDE SEQUENCE [LARGE SCALE GENOMIC DNA]</scope>
    <source>
        <strain>C3-41</strain>
    </source>
</reference>
<dbReference type="EMBL" id="CP000817">
    <property type="protein sequence ID" value="ACA37653.1"/>
    <property type="molecule type" value="Genomic_DNA"/>
</dbReference>
<dbReference type="RefSeq" id="WP_012291831.1">
    <property type="nucleotide sequence ID" value="NC_010382.1"/>
</dbReference>
<dbReference type="SMR" id="B1HS35"/>
<dbReference type="EnsemblBacteria" id="ACA37653">
    <property type="protein sequence ID" value="ACA37653"/>
    <property type="gene ID" value="Bsph_0007"/>
</dbReference>
<dbReference type="KEGG" id="lsp:Bsph_0007"/>
<dbReference type="HOGENOM" id="CLU_040267_0_1_9"/>
<dbReference type="Proteomes" id="UP000002164">
    <property type="component" value="Chromosome"/>
</dbReference>
<dbReference type="GO" id="GO:0005737">
    <property type="term" value="C:cytoplasm"/>
    <property type="evidence" value="ECO:0007669"/>
    <property type="project" value="UniProtKB-SubCell"/>
</dbReference>
<dbReference type="GO" id="GO:0005524">
    <property type="term" value="F:ATP binding"/>
    <property type="evidence" value="ECO:0007669"/>
    <property type="project" value="UniProtKB-UniRule"/>
</dbReference>
<dbReference type="GO" id="GO:0003697">
    <property type="term" value="F:single-stranded DNA binding"/>
    <property type="evidence" value="ECO:0007669"/>
    <property type="project" value="UniProtKB-UniRule"/>
</dbReference>
<dbReference type="GO" id="GO:0006260">
    <property type="term" value="P:DNA replication"/>
    <property type="evidence" value="ECO:0007669"/>
    <property type="project" value="UniProtKB-UniRule"/>
</dbReference>
<dbReference type="GO" id="GO:0000731">
    <property type="term" value="P:DNA synthesis involved in DNA repair"/>
    <property type="evidence" value="ECO:0007669"/>
    <property type="project" value="TreeGrafter"/>
</dbReference>
<dbReference type="GO" id="GO:0006302">
    <property type="term" value="P:double-strand break repair"/>
    <property type="evidence" value="ECO:0007669"/>
    <property type="project" value="TreeGrafter"/>
</dbReference>
<dbReference type="GO" id="GO:0009432">
    <property type="term" value="P:SOS response"/>
    <property type="evidence" value="ECO:0007669"/>
    <property type="project" value="UniProtKB-UniRule"/>
</dbReference>
<dbReference type="CDD" id="cd03242">
    <property type="entry name" value="ABC_RecF"/>
    <property type="match status" value="1"/>
</dbReference>
<dbReference type="FunFam" id="1.20.1050.90:FF:000002">
    <property type="entry name" value="DNA replication and repair protein RecF"/>
    <property type="match status" value="1"/>
</dbReference>
<dbReference type="Gene3D" id="3.40.50.300">
    <property type="entry name" value="P-loop containing nucleotide triphosphate hydrolases"/>
    <property type="match status" value="1"/>
</dbReference>
<dbReference type="Gene3D" id="1.20.1050.90">
    <property type="entry name" value="RecF/RecN/SMC, N-terminal domain"/>
    <property type="match status" value="1"/>
</dbReference>
<dbReference type="HAMAP" id="MF_00365">
    <property type="entry name" value="RecF"/>
    <property type="match status" value="1"/>
</dbReference>
<dbReference type="InterPro" id="IPR001238">
    <property type="entry name" value="DNA-binding_RecF"/>
</dbReference>
<dbReference type="InterPro" id="IPR018078">
    <property type="entry name" value="DNA-binding_RecF_CS"/>
</dbReference>
<dbReference type="InterPro" id="IPR027417">
    <property type="entry name" value="P-loop_NTPase"/>
</dbReference>
<dbReference type="InterPro" id="IPR003395">
    <property type="entry name" value="RecF/RecN/SMC_N"/>
</dbReference>
<dbReference type="InterPro" id="IPR042174">
    <property type="entry name" value="RecF_2"/>
</dbReference>
<dbReference type="NCBIfam" id="TIGR00611">
    <property type="entry name" value="recf"/>
    <property type="match status" value="1"/>
</dbReference>
<dbReference type="PANTHER" id="PTHR32182">
    <property type="entry name" value="DNA REPLICATION AND REPAIR PROTEIN RECF"/>
    <property type="match status" value="1"/>
</dbReference>
<dbReference type="PANTHER" id="PTHR32182:SF0">
    <property type="entry name" value="DNA REPLICATION AND REPAIR PROTEIN RECF"/>
    <property type="match status" value="1"/>
</dbReference>
<dbReference type="Pfam" id="PF02463">
    <property type="entry name" value="SMC_N"/>
    <property type="match status" value="1"/>
</dbReference>
<dbReference type="SUPFAM" id="SSF52540">
    <property type="entry name" value="P-loop containing nucleoside triphosphate hydrolases"/>
    <property type="match status" value="1"/>
</dbReference>
<dbReference type="PROSITE" id="PS00618">
    <property type="entry name" value="RECF_2"/>
    <property type="match status" value="1"/>
</dbReference>
<organism>
    <name type="scientific">Lysinibacillus sphaericus (strain C3-41)</name>
    <dbReference type="NCBI Taxonomy" id="444177"/>
    <lineage>
        <taxon>Bacteria</taxon>
        <taxon>Bacillati</taxon>
        <taxon>Bacillota</taxon>
        <taxon>Bacilli</taxon>
        <taxon>Bacillales</taxon>
        <taxon>Bacillaceae</taxon>
        <taxon>Lysinibacillus</taxon>
    </lineage>
</organism>
<gene>
    <name evidence="1" type="primary">recF</name>
    <name type="ordered locus">Bsph_0007</name>
</gene>
<sequence>MHIEQIKLTNYRNYDALALNFSPKINVFIGENAQGKTNVMESIYVLAMAKSHRTTNDKELIRWDSDYGKIEGAVQKRHGILPIELTITKKGKKGKINHIEQSRLSHYIGQMNVVMFAPEDLNVVKGSPQIRRRFIDMEIGQISPVYLHDLLTFQKVLKQRNHFLKMNQGKSMSNDVMYEVYNEQYIHAATQIIRKRFQFMDLLQEWAEPIHAGISQGKETLIIKYRTVAGIEKEHSSSEIENTLHQKLMEAREREFDRGVTLVGPHRDDLQFLVNGYDVQTYGSQGQQRTTALSLKLAEIELIKQETNETPILLLDDVLSELDDYRQSHLLNTIQGEVQTFVTTTSVEGIHHETMEQAQLFHVKQGAIEKS</sequence>
<feature type="chain" id="PRO_1000121132" description="DNA replication and repair protein RecF">
    <location>
        <begin position="1"/>
        <end position="371"/>
    </location>
</feature>
<feature type="binding site" evidence="1">
    <location>
        <begin position="30"/>
        <end position="37"/>
    </location>
    <ligand>
        <name>ATP</name>
        <dbReference type="ChEBI" id="CHEBI:30616"/>
    </ligand>
</feature>